<feature type="chain" id="PRO_0000236402" description="ATP-dependent Clp protease proteolytic subunit 1">
    <location>
        <begin position="1"/>
        <end position="233"/>
    </location>
</feature>
<feature type="active site" description="Nucleophile" evidence="1">
    <location>
        <position position="116"/>
    </location>
</feature>
<feature type="active site" evidence="1">
    <location>
        <position position="141"/>
    </location>
</feature>
<comment type="function">
    <text evidence="1">Cleaves peptides in various proteins in a process that requires ATP hydrolysis. Has a chymotrypsin-like activity. Plays a major role in the degradation of misfolded proteins.</text>
</comment>
<comment type="catalytic activity">
    <reaction evidence="1">
        <text>Hydrolysis of proteins to small peptides in the presence of ATP and magnesium. alpha-casein is the usual test substrate. In the absence of ATP, only oligopeptides shorter than five residues are hydrolyzed (such as succinyl-Leu-Tyr-|-NHMec, and Leu-Tyr-Leu-|-Tyr-Trp, in which cleavage of the -Tyr-|-Leu- and -Tyr-|-Trp bonds also occurs).</text>
        <dbReference type="EC" id="3.4.21.92"/>
    </reaction>
</comment>
<comment type="subunit">
    <text evidence="1">Fourteen ClpP subunits assemble into 2 heptameric rings which stack back to back to give a disk-like structure with a central cavity, resembling the structure of eukaryotic proteasomes.</text>
</comment>
<comment type="subcellular location">
    <subcellularLocation>
        <location evidence="1">Cytoplasm</location>
    </subcellularLocation>
</comment>
<comment type="similarity">
    <text evidence="1">Belongs to the peptidase S14 family.</text>
</comment>
<comment type="sequence caution" evidence="2">
    <conflict type="erroneous initiation">
        <sequence resource="EMBL-CDS" id="ABC44393"/>
    </conflict>
</comment>
<keyword id="KW-0963">Cytoplasm</keyword>
<keyword id="KW-0378">Hydrolase</keyword>
<keyword id="KW-0645">Protease</keyword>
<keyword id="KW-1185">Reference proteome</keyword>
<keyword id="KW-0720">Serine protease</keyword>
<accession>Q2S2L8</accession>
<gene>
    <name evidence="1" type="primary">clpP1</name>
    <name type="ordered locus">SRU_1439</name>
</gene>
<sequence length="233" mass="25299">MTSLPSSIFQGGLGDQPQSGLVPKVVEQTTRGERAYDIFSRLLKERIVFIGTPINDQIANLTVAQLLYLESEGSSQPINIYINSPGGVIYSGLGVYDTMQYVEAPISTTCVGLAASMGSVLLAGGEDGQRACLPNSRVMMHQPMGGTEGQASDIEIQAKEMAWLKKRLYQILSFHTGKDIDQIEEDADRNHWLSAEEAQEYGLVDQVMNEGNLDALKSIHANGEASDADSDEE</sequence>
<protein>
    <recommendedName>
        <fullName evidence="1">ATP-dependent Clp protease proteolytic subunit 1</fullName>
        <ecNumber evidence="1">3.4.21.92</ecNumber>
    </recommendedName>
    <alternativeName>
        <fullName evidence="1">Endopeptidase Clp 1</fullName>
    </alternativeName>
</protein>
<dbReference type="EC" id="3.4.21.92" evidence="1"/>
<dbReference type="EMBL" id="CP000159">
    <property type="protein sequence ID" value="ABC44393.1"/>
    <property type="status" value="ALT_INIT"/>
    <property type="molecule type" value="Genomic_DNA"/>
</dbReference>
<dbReference type="RefSeq" id="YP_445563.1">
    <property type="nucleotide sequence ID" value="NC_007677.1"/>
</dbReference>
<dbReference type="SMR" id="Q2S2L8"/>
<dbReference type="STRING" id="309807.SRU_1439"/>
<dbReference type="EnsemblBacteria" id="ABC44393">
    <property type="protein sequence ID" value="ABC44393"/>
    <property type="gene ID" value="SRU_1439"/>
</dbReference>
<dbReference type="KEGG" id="sru:SRU_1439"/>
<dbReference type="PATRIC" id="fig|309807.25.peg.1494"/>
<dbReference type="eggNOG" id="COG0740">
    <property type="taxonomic scope" value="Bacteria"/>
</dbReference>
<dbReference type="HOGENOM" id="CLU_058707_3_1_10"/>
<dbReference type="OrthoDB" id="9802800at2"/>
<dbReference type="Proteomes" id="UP000008674">
    <property type="component" value="Chromosome"/>
</dbReference>
<dbReference type="GO" id="GO:0005737">
    <property type="term" value="C:cytoplasm"/>
    <property type="evidence" value="ECO:0007669"/>
    <property type="project" value="UniProtKB-SubCell"/>
</dbReference>
<dbReference type="GO" id="GO:0009368">
    <property type="term" value="C:endopeptidase Clp complex"/>
    <property type="evidence" value="ECO:0007669"/>
    <property type="project" value="TreeGrafter"/>
</dbReference>
<dbReference type="GO" id="GO:0004176">
    <property type="term" value="F:ATP-dependent peptidase activity"/>
    <property type="evidence" value="ECO:0007669"/>
    <property type="project" value="InterPro"/>
</dbReference>
<dbReference type="GO" id="GO:0051117">
    <property type="term" value="F:ATPase binding"/>
    <property type="evidence" value="ECO:0007669"/>
    <property type="project" value="TreeGrafter"/>
</dbReference>
<dbReference type="GO" id="GO:0004252">
    <property type="term" value="F:serine-type endopeptidase activity"/>
    <property type="evidence" value="ECO:0007669"/>
    <property type="project" value="UniProtKB-UniRule"/>
</dbReference>
<dbReference type="GO" id="GO:0006515">
    <property type="term" value="P:protein quality control for misfolded or incompletely synthesized proteins"/>
    <property type="evidence" value="ECO:0007669"/>
    <property type="project" value="TreeGrafter"/>
</dbReference>
<dbReference type="CDD" id="cd07017">
    <property type="entry name" value="S14_ClpP_2"/>
    <property type="match status" value="1"/>
</dbReference>
<dbReference type="FunFam" id="3.90.226.10:FF:000001">
    <property type="entry name" value="ATP-dependent Clp protease proteolytic subunit"/>
    <property type="match status" value="1"/>
</dbReference>
<dbReference type="Gene3D" id="3.90.226.10">
    <property type="entry name" value="2-enoyl-CoA Hydratase, Chain A, domain 1"/>
    <property type="match status" value="1"/>
</dbReference>
<dbReference type="HAMAP" id="MF_00444">
    <property type="entry name" value="ClpP"/>
    <property type="match status" value="1"/>
</dbReference>
<dbReference type="InterPro" id="IPR001907">
    <property type="entry name" value="ClpP"/>
</dbReference>
<dbReference type="InterPro" id="IPR029045">
    <property type="entry name" value="ClpP/crotonase-like_dom_sf"/>
</dbReference>
<dbReference type="InterPro" id="IPR023562">
    <property type="entry name" value="ClpP/TepA"/>
</dbReference>
<dbReference type="InterPro" id="IPR033135">
    <property type="entry name" value="ClpP_His_AS"/>
</dbReference>
<dbReference type="InterPro" id="IPR018215">
    <property type="entry name" value="ClpP_Ser_AS"/>
</dbReference>
<dbReference type="NCBIfam" id="NF001368">
    <property type="entry name" value="PRK00277.1"/>
    <property type="match status" value="1"/>
</dbReference>
<dbReference type="NCBIfam" id="NF009205">
    <property type="entry name" value="PRK12553.1"/>
    <property type="match status" value="1"/>
</dbReference>
<dbReference type="PANTHER" id="PTHR10381">
    <property type="entry name" value="ATP-DEPENDENT CLP PROTEASE PROTEOLYTIC SUBUNIT"/>
    <property type="match status" value="1"/>
</dbReference>
<dbReference type="PANTHER" id="PTHR10381:SF70">
    <property type="entry name" value="ATP-DEPENDENT CLP PROTEASE PROTEOLYTIC SUBUNIT"/>
    <property type="match status" value="1"/>
</dbReference>
<dbReference type="Pfam" id="PF00574">
    <property type="entry name" value="CLP_protease"/>
    <property type="match status" value="1"/>
</dbReference>
<dbReference type="PRINTS" id="PR00127">
    <property type="entry name" value="CLPPROTEASEP"/>
</dbReference>
<dbReference type="SUPFAM" id="SSF52096">
    <property type="entry name" value="ClpP/crotonase"/>
    <property type="match status" value="1"/>
</dbReference>
<dbReference type="PROSITE" id="PS00382">
    <property type="entry name" value="CLP_PROTEASE_HIS"/>
    <property type="match status" value="1"/>
</dbReference>
<dbReference type="PROSITE" id="PS00381">
    <property type="entry name" value="CLP_PROTEASE_SER"/>
    <property type="match status" value="1"/>
</dbReference>
<organism>
    <name type="scientific">Salinibacter ruber (strain DSM 13855 / M31)</name>
    <dbReference type="NCBI Taxonomy" id="309807"/>
    <lineage>
        <taxon>Bacteria</taxon>
        <taxon>Pseudomonadati</taxon>
        <taxon>Rhodothermota</taxon>
        <taxon>Rhodothermia</taxon>
        <taxon>Rhodothermales</taxon>
        <taxon>Salinibacteraceae</taxon>
        <taxon>Salinibacter</taxon>
    </lineage>
</organism>
<proteinExistence type="inferred from homology"/>
<reference key="1">
    <citation type="journal article" date="2005" name="Proc. Natl. Acad. Sci. U.S.A.">
        <title>The genome of Salinibacter ruber: convergence and gene exchange among hyperhalophilic bacteria and archaea.</title>
        <authorList>
            <person name="Mongodin E.F."/>
            <person name="Nelson K.E."/>
            <person name="Daugherty S."/>
            <person name="DeBoy R.T."/>
            <person name="Wister J."/>
            <person name="Khouri H."/>
            <person name="Weidman J."/>
            <person name="Walsh D.A."/>
            <person name="Papke R.T."/>
            <person name="Sanchez Perez G."/>
            <person name="Sharma A.K."/>
            <person name="Nesbo C.L."/>
            <person name="MacLeod D."/>
            <person name="Bapteste E."/>
            <person name="Doolittle W.F."/>
            <person name="Charlebois R.L."/>
            <person name="Legault B."/>
            <person name="Rodriguez-Valera F."/>
        </authorList>
    </citation>
    <scope>NUCLEOTIDE SEQUENCE [LARGE SCALE GENOMIC DNA]</scope>
    <source>
        <strain>DSM 13855 / CECT 5946 / M31</strain>
    </source>
</reference>
<name>CLPP1_SALRD</name>
<evidence type="ECO:0000255" key="1">
    <source>
        <dbReference type="HAMAP-Rule" id="MF_00444"/>
    </source>
</evidence>
<evidence type="ECO:0000305" key="2"/>